<name>OBG_HALH5</name>
<comment type="function">
    <text evidence="1">An essential GTPase which binds GTP, GDP and possibly (p)ppGpp with moderate affinity, with high nucleotide exchange rates and a fairly low GTP hydrolysis rate. Plays a role in control of the cell cycle, stress response, ribosome biogenesis and in those bacteria that undergo differentiation, in morphogenesis control.</text>
</comment>
<comment type="cofactor">
    <cofactor evidence="1">
        <name>Mg(2+)</name>
        <dbReference type="ChEBI" id="CHEBI:18420"/>
    </cofactor>
</comment>
<comment type="subunit">
    <text evidence="1">Monomer.</text>
</comment>
<comment type="subcellular location">
    <subcellularLocation>
        <location evidence="1">Cytoplasm</location>
    </subcellularLocation>
</comment>
<comment type="similarity">
    <text evidence="1">Belongs to the TRAFAC class OBG-HflX-like GTPase superfamily. OBG GTPase family.</text>
</comment>
<reference key="1">
    <citation type="journal article" date="2000" name="Nucleic Acids Res.">
        <title>Complete genome sequence of the alkaliphilic bacterium Bacillus halodurans and genomic sequence comparison with Bacillus subtilis.</title>
        <authorList>
            <person name="Takami H."/>
            <person name="Nakasone K."/>
            <person name="Takaki Y."/>
            <person name="Maeno G."/>
            <person name="Sasaki R."/>
            <person name="Masui N."/>
            <person name="Fuji F."/>
            <person name="Hirama C."/>
            <person name="Nakamura Y."/>
            <person name="Ogasawara N."/>
            <person name="Kuhara S."/>
            <person name="Horikoshi K."/>
        </authorList>
    </citation>
    <scope>NUCLEOTIDE SEQUENCE [LARGE SCALE GENOMIC DNA]</scope>
    <source>
        <strain>ATCC BAA-125 / DSM 18197 / FERM 7344 / JCM 9153 / C-125</strain>
    </source>
</reference>
<protein>
    <recommendedName>
        <fullName evidence="1">GTPase Obg</fullName>
        <ecNumber evidence="1">3.6.5.-</ecNumber>
    </recommendedName>
    <alternativeName>
        <fullName evidence="1">GTP-binding protein Obg</fullName>
    </alternativeName>
</protein>
<gene>
    <name evidence="1" type="primary">obg</name>
    <name type="ordered locus">BH1213</name>
</gene>
<proteinExistence type="inferred from homology"/>
<feature type="chain" id="PRO_0000385725" description="GTPase Obg">
    <location>
        <begin position="1"/>
        <end position="427"/>
    </location>
</feature>
<feature type="domain" description="Obg" evidence="3">
    <location>
        <begin position="1"/>
        <end position="158"/>
    </location>
</feature>
<feature type="domain" description="OBG-type G" evidence="1">
    <location>
        <begin position="159"/>
        <end position="329"/>
    </location>
</feature>
<feature type="domain" description="OCT" evidence="2">
    <location>
        <begin position="349"/>
        <end position="427"/>
    </location>
</feature>
<feature type="region of interest" description="Disordered" evidence="4">
    <location>
        <begin position="118"/>
        <end position="144"/>
    </location>
</feature>
<feature type="binding site" evidence="1">
    <location>
        <begin position="165"/>
        <end position="172"/>
    </location>
    <ligand>
        <name>GTP</name>
        <dbReference type="ChEBI" id="CHEBI:37565"/>
    </ligand>
</feature>
<feature type="binding site" evidence="1">
    <location>
        <position position="172"/>
    </location>
    <ligand>
        <name>Mg(2+)</name>
        <dbReference type="ChEBI" id="CHEBI:18420"/>
    </ligand>
</feature>
<feature type="binding site" evidence="1">
    <location>
        <begin position="190"/>
        <end position="194"/>
    </location>
    <ligand>
        <name>GTP</name>
        <dbReference type="ChEBI" id="CHEBI:37565"/>
    </ligand>
</feature>
<feature type="binding site" evidence="1">
    <location>
        <position position="192"/>
    </location>
    <ligand>
        <name>Mg(2+)</name>
        <dbReference type="ChEBI" id="CHEBI:18420"/>
    </ligand>
</feature>
<feature type="binding site" evidence="1">
    <location>
        <begin position="212"/>
        <end position="215"/>
    </location>
    <ligand>
        <name>GTP</name>
        <dbReference type="ChEBI" id="CHEBI:37565"/>
    </ligand>
</feature>
<feature type="binding site" evidence="1">
    <location>
        <begin position="282"/>
        <end position="285"/>
    </location>
    <ligand>
        <name>GTP</name>
        <dbReference type="ChEBI" id="CHEBI:37565"/>
    </ligand>
</feature>
<feature type="binding site" evidence="1">
    <location>
        <begin position="310"/>
        <end position="312"/>
    </location>
    <ligand>
        <name>GTP</name>
        <dbReference type="ChEBI" id="CHEBI:37565"/>
    </ligand>
</feature>
<organism>
    <name type="scientific">Halalkalibacterium halodurans (strain ATCC BAA-125 / DSM 18197 / FERM 7344 / JCM 9153 / C-125)</name>
    <name type="common">Bacillus halodurans</name>
    <dbReference type="NCBI Taxonomy" id="272558"/>
    <lineage>
        <taxon>Bacteria</taxon>
        <taxon>Bacillati</taxon>
        <taxon>Bacillota</taxon>
        <taxon>Bacilli</taxon>
        <taxon>Bacillales</taxon>
        <taxon>Bacillaceae</taxon>
        <taxon>Halalkalibacterium (ex Joshi et al. 2022)</taxon>
    </lineage>
</organism>
<evidence type="ECO:0000255" key="1">
    <source>
        <dbReference type="HAMAP-Rule" id="MF_01454"/>
    </source>
</evidence>
<evidence type="ECO:0000255" key="2">
    <source>
        <dbReference type="PROSITE-ProRule" id="PRU01229"/>
    </source>
</evidence>
<evidence type="ECO:0000255" key="3">
    <source>
        <dbReference type="PROSITE-ProRule" id="PRU01231"/>
    </source>
</evidence>
<evidence type="ECO:0000256" key="4">
    <source>
        <dbReference type="SAM" id="MobiDB-lite"/>
    </source>
</evidence>
<dbReference type="EC" id="3.6.5.-" evidence="1"/>
<dbReference type="EMBL" id="BA000004">
    <property type="protein sequence ID" value="BAB04932.1"/>
    <property type="molecule type" value="Genomic_DNA"/>
</dbReference>
<dbReference type="PIR" id="E83801">
    <property type="entry name" value="E83801"/>
</dbReference>
<dbReference type="RefSeq" id="WP_010897381.1">
    <property type="nucleotide sequence ID" value="NC_002570.2"/>
</dbReference>
<dbReference type="SMR" id="Q9KDK0"/>
<dbReference type="STRING" id="272558.gene:10727107"/>
<dbReference type="KEGG" id="bha:BH1213"/>
<dbReference type="eggNOG" id="COG0536">
    <property type="taxonomic scope" value="Bacteria"/>
</dbReference>
<dbReference type="HOGENOM" id="CLU_011747_2_1_9"/>
<dbReference type="OrthoDB" id="9807318at2"/>
<dbReference type="Proteomes" id="UP000001258">
    <property type="component" value="Chromosome"/>
</dbReference>
<dbReference type="GO" id="GO:0005737">
    <property type="term" value="C:cytoplasm"/>
    <property type="evidence" value="ECO:0007669"/>
    <property type="project" value="UniProtKB-SubCell"/>
</dbReference>
<dbReference type="GO" id="GO:0005525">
    <property type="term" value="F:GTP binding"/>
    <property type="evidence" value="ECO:0007669"/>
    <property type="project" value="UniProtKB-UniRule"/>
</dbReference>
<dbReference type="GO" id="GO:0003924">
    <property type="term" value="F:GTPase activity"/>
    <property type="evidence" value="ECO:0007669"/>
    <property type="project" value="UniProtKB-UniRule"/>
</dbReference>
<dbReference type="GO" id="GO:0000287">
    <property type="term" value="F:magnesium ion binding"/>
    <property type="evidence" value="ECO:0007669"/>
    <property type="project" value="InterPro"/>
</dbReference>
<dbReference type="GO" id="GO:0042254">
    <property type="term" value="P:ribosome biogenesis"/>
    <property type="evidence" value="ECO:0007669"/>
    <property type="project" value="UniProtKB-UniRule"/>
</dbReference>
<dbReference type="CDD" id="cd01898">
    <property type="entry name" value="Obg"/>
    <property type="match status" value="1"/>
</dbReference>
<dbReference type="FunFam" id="2.70.210.12:FF:000001">
    <property type="entry name" value="GTPase Obg"/>
    <property type="match status" value="1"/>
</dbReference>
<dbReference type="FunFam" id="3.40.50.300:FF:000515">
    <property type="entry name" value="GTPase Obg"/>
    <property type="match status" value="1"/>
</dbReference>
<dbReference type="Gene3D" id="3.30.300.350">
    <property type="entry name" value="GTP-binding protein OBG, C-terminal domain"/>
    <property type="match status" value="1"/>
</dbReference>
<dbReference type="Gene3D" id="2.70.210.12">
    <property type="entry name" value="GTP1/OBG domain"/>
    <property type="match status" value="1"/>
</dbReference>
<dbReference type="Gene3D" id="3.40.50.300">
    <property type="entry name" value="P-loop containing nucleotide triphosphate hydrolases"/>
    <property type="match status" value="1"/>
</dbReference>
<dbReference type="HAMAP" id="MF_01454">
    <property type="entry name" value="GTPase_Obg"/>
    <property type="match status" value="1"/>
</dbReference>
<dbReference type="InterPro" id="IPR031167">
    <property type="entry name" value="G_OBG"/>
</dbReference>
<dbReference type="InterPro" id="IPR006073">
    <property type="entry name" value="GTP-bd"/>
</dbReference>
<dbReference type="InterPro" id="IPR014100">
    <property type="entry name" value="GTP-bd_Obg/CgtA"/>
</dbReference>
<dbReference type="InterPro" id="IPR036346">
    <property type="entry name" value="GTP-bd_prot_GTP1/OBG_C_sf"/>
</dbReference>
<dbReference type="InterPro" id="IPR006074">
    <property type="entry name" value="GTP1-OBG_CS"/>
</dbReference>
<dbReference type="InterPro" id="IPR006169">
    <property type="entry name" value="GTP1_OBG_dom"/>
</dbReference>
<dbReference type="InterPro" id="IPR036726">
    <property type="entry name" value="GTP1_OBG_dom_sf"/>
</dbReference>
<dbReference type="InterPro" id="IPR045086">
    <property type="entry name" value="OBG_GTPase"/>
</dbReference>
<dbReference type="InterPro" id="IPR015349">
    <property type="entry name" value="OCT_dom"/>
</dbReference>
<dbReference type="InterPro" id="IPR027417">
    <property type="entry name" value="P-loop_NTPase"/>
</dbReference>
<dbReference type="InterPro" id="IPR005225">
    <property type="entry name" value="Small_GTP-bd"/>
</dbReference>
<dbReference type="NCBIfam" id="TIGR02729">
    <property type="entry name" value="Obg_CgtA"/>
    <property type="match status" value="1"/>
</dbReference>
<dbReference type="NCBIfam" id="TIGR03595">
    <property type="entry name" value="Obg_CgtA_exten"/>
    <property type="match status" value="1"/>
</dbReference>
<dbReference type="NCBIfam" id="NF008954">
    <property type="entry name" value="PRK12296.1"/>
    <property type="match status" value="1"/>
</dbReference>
<dbReference type="NCBIfam" id="NF008955">
    <property type="entry name" value="PRK12297.1"/>
    <property type="match status" value="1"/>
</dbReference>
<dbReference type="NCBIfam" id="NF008956">
    <property type="entry name" value="PRK12299.1"/>
    <property type="match status" value="1"/>
</dbReference>
<dbReference type="NCBIfam" id="TIGR00231">
    <property type="entry name" value="small_GTP"/>
    <property type="match status" value="1"/>
</dbReference>
<dbReference type="PANTHER" id="PTHR11702">
    <property type="entry name" value="DEVELOPMENTALLY REGULATED GTP-BINDING PROTEIN-RELATED"/>
    <property type="match status" value="1"/>
</dbReference>
<dbReference type="PANTHER" id="PTHR11702:SF31">
    <property type="entry name" value="MITOCHONDRIAL RIBOSOME-ASSOCIATED GTPASE 2"/>
    <property type="match status" value="1"/>
</dbReference>
<dbReference type="Pfam" id="PF09269">
    <property type="entry name" value="DUF1967"/>
    <property type="match status" value="1"/>
</dbReference>
<dbReference type="Pfam" id="PF01018">
    <property type="entry name" value="GTP1_OBG"/>
    <property type="match status" value="1"/>
</dbReference>
<dbReference type="Pfam" id="PF01926">
    <property type="entry name" value="MMR_HSR1"/>
    <property type="match status" value="1"/>
</dbReference>
<dbReference type="PIRSF" id="PIRSF002401">
    <property type="entry name" value="GTP_bd_Obg/CgtA"/>
    <property type="match status" value="1"/>
</dbReference>
<dbReference type="PRINTS" id="PR00326">
    <property type="entry name" value="GTP1OBG"/>
</dbReference>
<dbReference type="SUPFAM" id="SSF102741">
    <property type="entry name" value="Obg GTP-binding protein C-terminal domain"/>
    <property type="match status" value="1"/>
</dbReference>
<dbReference type="SUPFAM" id="SSF82051">
    <property type="entry name" value="Obg GTP-binding protein N-terminal domain"/>
    <property type="match status" value="1"/>
</dbReference>
<dbReference type="SUPFAM" id="SSF52540">
    <property type="entry name" value="P-loop containing nucleoside triphosphate hydrolases"/>
    <property type="match status" value="1"/>
</dbReference>
<dbReference type="PROSITE" id="PS51710">
    <property type="entry name" value="G_OBG"/>
    <property type="match status" value="1"/>
</dbReference>
<dbReference type="PROSITE" id="PS00905">
    <property type="entry name" value="GTP1_OBG"/>
    <property type="match status" value="1"/>
</dbReference>
<dbReference type="PROSITE" id="PS51883">
    <property type="entry name" value="OBG"/>
    <property type="match status" value="1"/>
</dbReference>
<dbReference type="PROSITE" id="PS51881">
    <property type="entry name" value="OCT"/>
    <property type="match status" value="1"/>
</dbReference>
<accession>Q9KDK0</accession>
<keyword id="KW-0963">Cytoplasm</keyword>
<keyword id="KW-0342">GTP-binding</keyword>
<keyword id="KW-0378">Hydrolase</keyword>
<keyword id="KW-0460">Magnesium</keyword>
<keyword id="KW-0479">Metal-binding</keyword>
<keyword id="KW-0547">Nucleotide-binding</keyword>
<keyword id="KW-1185">Reference proteome</keyword>
<sequence length="427" mass="47459">MFVDKVKVYVKGGDGGNGMVAFRREKYVPDGGPAGGDGGKGGSVIFKVDEGLRTLMDFRYQRHFKADRGEHGRPKNQHGKNAEDKIVRVPPGTTVIDEQTGQVLADLTHHGQEAIIAKGGRGGRGNTRFATPANPAPELSENGEPGVERDVILELKVLADAGLVGFPSVGKSTLLSVVSSAKPKIAEYHFTTITPNLGVVRVDDGRSFVLADLPGLIEGAHEGIGLGHQFLRHIERTRVIVHVIDMSALEGRDPYDDYVSINEELKAYNLRLMERPQLIVANKMDMPNAAENLERFKEKLTDDHPIFPISALTRDGLQPLLRAIMDTIETTPEFPIYEETETESRVLYKHDKEQDPFVISRADDGAYVLSGAEIEKLFKMTDFSRDESVRRFSRQLRHMGVDEALRQRGAKDGDLVRLLEFEFEFIE</sequence>